<proteinExistence type="evidence at protein level"/>
<protein>
    <recommendedName>
        <fullName>Myosin regulatory light polypeptide 9</fullName>
    </recommendedName>
    <alternativeName>
        <fullName>20 kDa myosin light chain</fullName>
        <shortName>LC20</shortName>
    </alternativeName>
    <alternativeName>
        <fullName>MLC-2C</fullName>
    </alternativeName>
    <alternativeName>
        <fullName>Myosin RLC</fullName>
    </alternativeName>
    <alternativeName>
        <fullName>Myosin regulatory light chain 2, smooth muscle isoform</fullName>
    </alternativeName>
    <alternativeName>
        <fullName>Myosin regulatory light chain 9</fullName>
    </alternativeName>
    <alternativeName>
        <fullName>Myosin regulatory light chain MRLC1</fullName>
    </alternativeName>
</protein>
<accession>P24844</accession>
<accession>E1P5T6</accession>
<accession>Q9BQL9</accession>
<accession>Q9BUF9</accession>
<accession>Q9H136</accession>
<sequence>MSSKRAKAKTTKKRPQRATSNVFAMFDQSQIQEFKEAFNMIDQNRDGFIDKEDLHDMLASLGKNPTDEYLEGMMSEAPGPINFTMFLTMFGEKLNGTDPEDVIRNAFACFDEEASGFIHEDHLRELLTTMGDRFTDEEVDEMYREAPIDKKGNFNYVEFTRILKHGAKDKDD</sequence>
<name>MYL9_HUMAN</name>
<dbReference type="EMBL" id="J02854">
    <property type="protein sequence ID" value="AAA59852.1"/>
    <property type="molecule type" value="mRNA"/>
</dbReference>
<dbReference type="EMBL" id="AF176043">
    <property type="protein sequence ID" value="AAQ13654.1"/>
    <property type="molecule type" value="mRNA"/>
</dbReference>
<dbReference type="EMBL" id="D82057">
    <property type="protein sequence ID" value="BAB88917.1"/>
    <property type="molecule type" value="mRNA"/>
</dbReference>
<dbReference type="EMBL" id="AL050318">
    <property type="status" value="NOT_ANNOTATED_CDS"/>
    <property type="molecule type" value="Genomic_DNA"/>
</dbReference>
<dbReference type="EMBL" id="CH471077">
    <property type="protein sequence ID" value="EAW76129.1"/>
    <property type="molecule type" value="Genomic_DNA"/>
</dbReference>
<dbReference type="EMBL" id="CH471077">
    <property type="protein sequence ID" value="EAW76131.1"/>
    <property type="molecule type" value="Genomic_DNA"/>
</dbReference>
<dbReference type="EMBL" id="CH471077">
    <property type="protein sequence ID" value="EAW76132.1"/>
    <property type="molecule type" value="Genomic_DNA"/>
</dbReference>
<dbReference type="EMBL" id="CH471077">
    <property type="protein sequence ID" value="EAW76133.1"/>
    <property type="molecule type" value="Genomic_DNA"/>
</dbReference>
<dbReference type="EMBL" id="CH471077">
    <property type="protein sequence ID" value="EAW76134.1"/>
    <property type="molecule type" value="Genomic_DNA"/>
</dbReference>
<dbReference type="EMBL" id="BC002648">
    <property type="protein sequence ID" value="AAH02648.1"/>
    <property type="molecule type" value="mRNA"/>
</dbReference>
<dbReference type="CCDS" id="CCDS13276.1">
    <molecule id="P24844-1"/>
</dbReference>
<dbReference type="CCDS" id="CCDS13277.1">
    <molecule id="P24844-2"/>
</dbReference>
<dbReference type="PIR" id="A32031">
    <property type="entry name" value="A32031"/>
</dbReference>
<dbReference type="RefSeq" id="NP_006088.2">
    <molecule id="P24844-1"/>
    <property type="nucleotide sequence ID" value="NM_006097.4"/>
</dbReference>
<dbReference type="RefSeq" id="NP_852667.1">
    <molecule id="P24844-2"/>
    <property type="nucleotide sequence ID" value="NM_181526.3"/>
</dbReference>
<dbReference type="SMR" id="P24844"/>
<dbReference type="BioGRID" id="115670">
    <property type="interactions" value="66"/>
</dbReference>
<dbReference type="DIP" id="DIP-60525N"/>
<dbReference type="FunCoup" id="P24844">
    <property type="interactions" value="945"/>
</dbReference>
<dbReference type="IntAct" id="P24844">
    <property type="interactions" value="31"/>
</dbReference>
<dbReference type="MINT" id="P24844"/>
<dbReference type="STRING" id="9606.ENSP00000279022"/>
<dbReference type="GlyGen" id="P24844">
    <property type="glycosylation" value="1 site, 1 O-linked glycan (1 site)"/>
</dbReference>
<dbReference type="iPTMnet" id="P24844"/>
<dbReference type="MetOSite" id="P24844"/>
<dbReference type="PhosphoSitePlus" id="P24844"/>
<dbReference type="BioMuta" id="MYL9"/>
<dbReference type="DMDM" id="20141521"/>
<dbReference type="OGP" id="P24844"/>
<dbReference type="jPOST" id="P24844"/>
<dbReference type="MassIVE" id="P24844"/>
<dbReference type="PaxDb" id="9606-ENSP00000279022"/>
<dbReference type="PeptideAtlas" id="P24844"/>
<dbReference type="ProteomicsDB" id="54231">
    <molecule id="P24844-1"/>
</dbReference>
<dbReference type="ProteomicsDB" id="54232">
    <molecule id="P24844-2"/>
</dbReference>
<dbReference type="Pumba" id="P24844"/>
<dbReference type="TopDownProteomics" id="P24844-1">
    <molecule id="P24844-1"/>
</dbReference>
<dbReference type="Antibodypedia" id="11734">
    <property type="antibodies" value="428 antibodies from 35 providers"/>
</dbReference>
<dbReference type="DNASU" id="10398"/>
<dbReference type="Ensembl" id="ENST00000279022.7">
    <molecule id="P24844-1"/>
    <property type="protein sequence ID" value="ENSP00000279022.2"/>
    <property type="gene ID" value="ENSG00000101335.10"/>
</dbReference>
<dbReference type="Ensembl" id="ENST00000346786.2">
    <molecule id="P24844-2"/>
    <property type="protein sequence ID" value="ENSP00000217313.2"/>
    <property type="gene ID" value="ENSG00000101335.10"/>
</dbReference>
<dbReference type="GeneID" id="10398"/>
<dbReference type="KEGG" id="hsa:10398"/>
<dbReference type="MANE-Select" id="ENST00000279022.7">
    <property type="protein sequence ID" value="ENSP00000279022.2"/>
    <property type="RefSeq nucleotide sequence ID" value="NM_006097.5"/>
    <property type="RefSeq protein sequence ID" value="NP_006088.2"/>
</dbReference>
<dbReference type="UCSC" id="uc002xfl.3">
    <molecule id="P24844-1"/>
    <property type="organism name" value="human"/>
</dbReference>
<dbReference type="AGR" id="HGNC:15754"/>
<dbReference type="CTD" id="10398"/>
<dbReference type="DisGeNET" id="10398"/>
<dbReference type="GeneCards" id="MYL9"/>
<dbReference type="HGNC" id="HGNC:15754">
    <property type="gene designation" value="MYL9"/>
</dbReference>
<dbReference type="HPA" id="ENSG00000101335">
    <property type="expression patterns" value="Tissue enhanced (intestine)"/>
</dbReference>
<dbReference type="MalaCards" id="MYL9"/>
<dbReference type="MIM" id="609905">
    <property type="type" value="gene"/>
</dbReference>
<dbReference type="MIM" id="619365">
    <property type="type" value="phenotype"/>
</dbReference>
<dbReference type="neXtProt" id="NX_P24844"/>
<dbReference type="OpenTargets" id="ENSG00000101335"/>
<dbReference type="PharmGKB" id="PA31387"/>
<dbReference type="VEuPathDB" id="HostDB:ENSG00000101335"/>
<dbReference type="eggNOG" id="KOG0031">
    <property type="taxonomic scope" value="Eukaryota"/>
</dbReference>
<dbReference type="GeneTree" id="ENSGT00940000155458"/>
<dbReference type="HOGENOM" id="CLU_061288_9_3_1"/>
<dbReference type="InParanoid" id="P24844"/>
<dbReference type="OMA" id="GVNFTMF"/>
<dbReference type="OrthoDB" id="429467at2759"/>
<dbReference type="PAN-GO" id="P24844">
    <property type="GO annotations" value="6 GO annotations based on evolutionary models"/>
</dbReference>
<dbReference type="PhylomeDB" id="P24844"/>
<dbReference type="TreeFam" id="TF314218"/>
<dbReference type="PathwayCommons" id="P24844"/>
<dbReference type="Reactome" id="R-HSA-3928663">
    <property type="pathway name" value="EPHA-mediated growth cone collapse"/>
</dbReference>
<dbReference type="Reactome" id="R-HSA-416572">
    <property type="pathway name" value="Sema4D induced cell migration and growth-cone collapse"/>
</dbReference>
<dbReference type="Reactome" id="R-HSA-445355">
    <property type="pathway name" value="Smooth Muscle Contraction"/>
</dbReference>
<dbReference type="Reactome" id="R-HSA-5625740">
    <property type="pathway name" value="RHO GTPases activate PKNs"/>
</dbReference>
<dbReference type="Reactome" id="R-HSA-5625900">
    <property type="pathway name" value="RHO GTPases activate CIT"/>
</dbReference>
<dbReference type="Reactome" id="R-HSA-5627117">
    <property type="pathway name" value="RHO GTPases Activate ROCKs"/>
</dbReference>
<dbReference type="Reactome" id="R-HSA-5627123">
    <property type="pathway name" value="RHO GTPases activate PAKs"/>
</dbReference>
<dbReference type="Reactome" id="R-HSA-8936459">
    <property type="pathway name" value="RUNX1 regulates genes involved in megakaryocyte differentiation and platelet function"/>
</dbReference>
<dbReference type="SignaLink" id="P24844"/>
<dbReference type="SIGNOR" id="P24844"/>
<dbReference type="BioGRID-ORCS" id="10398">
    <property type="hits" value="15 hits in 1150 CRISPR screens"/>
</dbReference>
<dbReference type="ChiTaRS" id="MYL9">
    <property type="organism name" value="human"/>
</dbReference>
<dbReference type="GeneWiki" id="MYL9"/>
<dbReference type="GenomeRNAi" id="10398"/>
<dbReference type="Pharos" id="P24844">
    <property type="development level" value="Tbio"/>
</dbReference>
<dbReference type="PRO" id="PR:P24844"/>
<dbReference type="Proteomes" id="UP000005640">
    <property type="component" value="Chromosome 20"/>
</dbReference>
<dbReference type="RNAct" id="P24844">
    <property type="molecule type" value="protein"/>
</dbReference>
<dbReference type="Bgee" id="ENSG00000101335">
    <property type="expression patterns" value="Expressed in popliteal artery and 182 other cell types or tissues"/>
</dbReference>
<dbReference type="ExpressionAtlas" id="P24844">
    <property type="expression patterns" value="baseline and differential"/>
</dbReference>
<dbReference type="GO" id="GO:0005938">
    <property type="term" value="C:cell cortex"/>
    <property type="evidence" value="ECO:0007669"/>
    <property type="project" value="UniProtKB-SubCell"/>
</dbReference>
<dbReference type="GO" id="GO:0005737">
    <property type="term" value="C:cytoplasm"/>
    <property type="evidence" value="ECO:0000318"/>
    <property type="project" value="GO_Central"/>
</dbReference>
<dbReference type="GO" id="GO:0005829">
    <property type="term" value="C:cytosol"/>
    <property type="evidence" value="ECO:0000304"/>
    <property type="project" value="Reactome"/>
</dbReference>
<dbReference type="GO" id="GO:0005859">
    <property type="term" value="C:muscle myosin complex"/>
    <property type="evidence" value="ECO:0000304"/>
    <property type="project" value="ProtInc"/>
</dbReference>
<dbReference type="GO" id="GO:0030016">
    <property type="term" value="C:myofibril"/>
    <property type="evidence" value="ECO:0000318"/>
    <property type="project" value="GO_Central"/>
</dbReference>
<dbReference type="GO" id="GO:0016460">
    <property type="term" value="C:myosin II complex"/>
    <property type="evidence" value="ECO:0000318"/>
    <property type="project" value="GO_Central"/>
</dbReference>
<dbReference type="GO" id="GO:0001725">
    <property type="term" value="C:stress fiber"/>
    <property type="evidence" value="ECO:0000314"/>
    <property type="project" value="UniProt"/>
</dbReference>
<dbReference type="GO" id="GO:0030018">
    <property type="term" value="C:Z disc"/>
    <property type="evidence" value="ECO:0007669"/>
    <property type="project" value="Ensembl"/>
</dbReference>
<dbReference type="GO" id="GO:0005509">
    <property type="term" value="F:calcium ion binding"/>
    <property type="evidence" value="ECO:0007669"/>
    <property type="project" value="InterPro"/>
</dbReference>
<dbReference type="GO" id="GO:0032036">
    <property type="term" value="F:myosin heavy chain binding"/>
    <property type="evidence" value="ECO:0000318"/>
    <property type="project" value="GO_Central"/>
</dbReference>
<dbReference type="GO" id="GO:0005200">
    <property type="term" value="F:structural constituent of cytoskeleton"/>
    <property type="evidence" value="ECO:0000314"/>
    <property type="project" value="UniProt"/>
</dbReference>
<dbReference type="GO" id="GO:0008307">
    <property type="term" value="F:structural constituent of muscle"/>
    <property type="evidence" value="ECO:0000304"/>
    <property type="project" value="ProtInc"/>
</dbReference>
<dbReference type="GO" id="GO:0030239">
    <property type="term" value="P:myofibril assembly"/>
    <property type="evidence" value="ECO:0000318"/>
    <property type="project" value="GO_Central"/>
</dbReference>
<dbReference type="GO" id="GO:0070527">
    <property type="term" value="P:platelet aggregation"/>
    <property type="evidence" value="ECO:0007001"/>
    <property type="project" value="UniProtKB"/>
</dbReference>
<dbReference type="GO" id="GO:0006937">
    <property type="term" value="P:regulation of muscle contraction"/>
    <property type="evidence" value="ECO:0000304"/>
    <property type="project" value="ProtInc"/>
</dbReference>
<dbReference type="GO" id="GO:0043149">
    <property type="term" value="P:stress fiber assembly"/>
    <property type="evidence" value="ECO:0000314"/>
    <property type="project" value="UniProt"/>
</dbReference>
<dbReference type="CDD" id="cd00051">
    <property type="entry name" value="EFh"/>
    <property type="match status" value="1"/>
</dbReference>
<dbReference type="FunFam" id="1.10.238.10:FF:000010">
    <property type="entry name" value="Myosin regulatory light chain 2, atrial isoform"/>
    <property type="match status" value="1"/>
</dbReference>
<dbReference type="FunFam" id="1.10.238.10:FF:000007">
    <property type="entry name" value="Putative myosin regulatory light chain sqh"/>
    <property type="match status" value="1"/>
</dbReference>
<dbReference type="Gene3D" id="1.10.238.10">
    <property type="entry name" value="EF-hand"/>
    <property type="match status" value="2"/>
</dbReference>
<dbReference type="InterPro" id="IPR011992">
    <property type="entry name" value="EF-hand-dom_pair"/>
</dbReference>
<dbReference type="InterPro" id="IPR018247">
    <property type="entry name" value="EF_Hand_1_Ca_BS"/>
</dbReference>
<dbReference type="InterPro" id="IPR002048">
    <property type="entry name" value="EF_hand_dom"/>
</dbReference>
<dbReference type="InterPro" id="IPR050403">
    <property type="entry name" value="Myosin_RLC"/>
</dbReference>
<dbReference type="PANTHER" id="PTHR23049">
    <property type="entry name" value="MYOSIN REGULATORY LIGHT CHAIN 2"/>
    <property type="match status" value="1"/>
</dbReference>
<dbReference type="Pfam" id="PF13499">
    <property type="entry name" value="EF-hand_7"/>
    <property type="match status" value="2"/>
</dbReference>
<dbReference type="SMART" id="SM00054">
    <property type="entry name" value="EFh"/>
    <property type="match status" value="2"/>
</dbReference>
<dbReference type="SUPFAM" id="SSF47473">
    <property type="entry name" value="EF-hand"/>
    <property type="match status" value="1"/>
</dbReference>
<dbReference type="PROSITE" id="PS00018">
    <property type="entry name" value="EF_HAND_1"/>
    <property type="match status" value="1"/>
</dbReference>
<dbReference type="PROSITE" id="PS50222">
    <property type="entry name" value="EF_HAND_2"/>
    <property type="match status" value="3"/>
</dbReference>
<gene>
    <name type="primary">MYL9</name>
    <name type="synonym">MLC2</name>
    <name type="synonym">MRLC1</name>
    <name type="synonym">MYRL2</name>
</gene>
<reference key="1">
    <citation type="journal article" date="1989" name="Biochemistry">
        <title>Characterization and differential expression of human vascular smooth muscle myosin light chain 2 isoform in nonmuscle cells.</title>
        <authorList>
            <person name="Kumar C.C."/>
            <person name="Mohan S.R."/>
            <person name="Zavodny P.J."/>
            <person name="Narula S.K."/>
            <person name="Leibowitz P.J."/>
        </authorList>
    </citation>
    <scope>NUCLEOTIDE SEQUENCE [MRNA] (ISOFORM 1)</scope>
    <scope>TISSUE SPECIFICITY</scope>
    <scope>FUNCTION</scope>
    <source>
        <tissue>Umbilical artery</tissue>
    </source>
</reference>
<reference key="2">
    <citation type="submission" date="1999-08" db="EMBL/GenBank/DDBJ databases">
        <title>Splice variant of regulatory myosin light chain, short version.</title>
        <authorList>
            <person name="Pan J.Y."/>
            <person name="Li S."/>
            <person name="Silberstein D.S."/>
        </authorList>
    </citation>
    <scope>NUCLEOTIDE SEQUENCE [MRNA] (ISOFORM 2)</scope>
</reference>
<reference key="3">
    <citation type="journal article" date="2001" name="Cell Struct. Funct.">
        <title>Diphosphorylated MRLC is required for organization of stress fibers in interphase cells and the contractile ring in dividing cells.</title>
        <authorList>
            <person name="Iwasaki T."/>
            <person name="Murata-Hori M."/>
            <person name="Ishitobi S."/>
            <person name="Hosoya H."/>
        </authorList>
    </citation>
    <scope>NUCLEOTIDE SEQUENCE [MRNA] (ISOFORM 1)</scope>
    <scope>PHOSPHORYLATION AT THR-19 AND SER-20</scope>
    <scope>FUNCTION</scope>
</reference>
<reference key="4">
    <citation type="journal article" date="2001" name="Nature">
        <title>The DNA sequence and comparative analysis of human chromosome 20.</title>
        <authorList>
            <person name="Deloukas P."/>
            <person name="Matthews L.H."/>
            <person name="Ashurst J.L."/>
            <person name="Burton J."/>
            <person name="Gilbert J.G.R."/>
            <person name="Jones M."/>
            <person name="Stavrides G."/>
            <person name="Almeida J.P."/>
            <person name="Babbage A.K."/>
            <person name="Bagguley C.L."/>
            <person name="Bailey J."/>
            <person name="Barlow K.F."/>
            <person name="Bates K.N."/>
            <person name="Beard L.M."/>
            <person name="Beare D.M."/>
            <person name="Beasley O.P."/>
            <person name="Bird C.P."/>
            <person name="Blakey S.E."/>
            <person name="Bridgeman A.M."/>
            <person name="Brown A.J."/>
            <person name="Buck D."/>
            <person name="Burrill W.D."/>
            <person name="Butler A.P."/>
            <person name="Carder C."/>
            <person name="Carter N.P."/>
            <person name="Chapman J.C."/>
            <person name="Clamp M."/>
            <person name="Clark G."/>
            <person name="Clark L.N."/>
            <person name="Clark S.Y."/>
            <person name="Clee C.M."/>
            <person name="Clegg S."/>
            <person name="Cobley V.E."/>
            <person name="Collier R.E."/>
            <person name="Connor R.E."/>
            <person name="Corby N.R."/>
            <person name="Coulson A."/>
            <person name="Coville G.J."/>
            <person name="Deadman R."/>
            <person name="Dhami P.D."/>
            <person name="Dunn M."/>
            <person name="Ellington A.G."/>
            <person name="Frankland J.A."/>
            <person name="Fraser A."/>
            <person name="French L."/>
            <person name="Garner P."/>
            <person name="Grafham D.V."/>
            <person name="Griffiths C."/>
            <person name="Griffiths M.N.D."/>
            <person name="Gwilliam R."/>
            <person name="Hall R.E."/>
            <person name="Hammond S."/>
            <person name="Harley J.L."/>
            <person name="Heath P.D."/>
            <person name="Ho S."/>
            <person name="Holden J.L."/>
            <person name="Howden P.J."/>
            <person name="Huckle E."/>
            <person name="Hunt A.R."/>
            <person name="Hunt S.E."/>
            <person name="Jekosch K."/>
            <person name="Johnson C.M."/>
            <person name="Johnson D."/>
            <person name="Kay M.P."/>
            <person name="Kimberley A.M."/>
            <person name="King A."/>
            <person name="Knights A."/>
            <person name="Laird G.K."/>
            <person name="Lawlor S."/>
            <person name="Lehvaeslaiho M.H."/>
            <person name="Leversha M.A."/>
            <person name="Lloyd C."/>
            <person name="Lloyd D.M."/>
            <person name="Lovell J.D."/>
            <person name="Marsh V.L."/>
            <person name="Martin S.L."/>
            <person name="McConnachie L.J."/>
            <person name="McLay K."/>
            <person name="McMurray A.A."/>
            <person name="Milne S.A."/>
            <person name="Mistry D."/>
            <person name="Moore M.J.F."/>
            <person name="Mullikin J.C."/>
            <person name="Nickerson T."/>
            <person name="Oliver K."/>
            <person name="Parker A."/>
            <person name="Patel R."/>
            <person name="Pearce T.A.V."/>
            <person name="Peck A.I."/>
            <person name="Phillimore B.J.C.T."/>
            <person name="Prathalingam S.R."/>
            <person name="Plumb R.W."/>
            <person name="Ramsay H."/>
            <person name="Rice C.M."/>
            <person name="Ross M.T."/>
            <person name="Scott C.E."/>
            <person name="Sehra H.K."/>
            <person name="Shownkeen R."/>
            <person name="Sims S."/>
            <person name="Skuce C.D."/>
            <person name="Smith M.L."/>
            <person name="Soderlund C."/>
            <person name="Steward C.A."/>
            <person name="Sulston J.E."/>
            <person name="Swann R.M."/>
            <person name="Sycamore N."/>
            <person name="Taylor R."/>
            <person name="Tee L."/>
            <person name="Thomas D.W."/>
            <person name="Thorpe A."/>
            <person name="Tracey A."/>
            <person name="Tromans A.C."/>
            <person name="Vaudin M."/>
            <person name="Wall M."/>
            <person name="Wallis J.M."/>
            <person name="Whitehead S.L."/>
            <person name="Whittaker P."/>
            <person name="Willey D.L."/>
            <person name="Williams L."/>
            <person name="Williams S.A."/>
            <person name="Wilming L."/>
            <person name="Wray P.W."/>
            <person name="Hubbard T."/>
            <person name="Durbin R.M."/>
            <person name="Bentley D.R."/>
            <person name="Beck S."/>
            <person name="Rogers J."/>
        </authorList>
    </citation>
    <scope>NUCLEOTIDE SEQUENCE [LARGE SCALE GENOMIC DNA]</scope>
</reference>
<reference key="5">
    <citation type="submission" date="2005-09" db="EMBL/GenBank/DDBJ databases">
        <authorList>
            <person name="Mural R.J."/>
            <person name="Istrail S."/>
            <person name="Sutton G.G."/>
            <person name="Florea L."/>
            <person name="Halpern A.L."/>
            <person name="Mobarry C.M."/>
            <person name="Lippert R."/>
            <person name="Walenz B."/>
            <person name="Shatkay H."/>
            <person name="Dew I."/>
            <person name="Miller J.R."/>
            <person name="Flanigan M.J."/>
            <person name="Edwards N.J."/>
            <person name="Bolanos R."/>
            <person name="Fasulo D."/>
            <person name="Halldorsson B.V."/>
            <person name="Hannenhalli S."/>
            <person name="Turner R."/>
            <person name="Yooseph S."/>
            <person name="Lu F."/>
            <person name="Nusskern D.R."/>
            <person name="Shue B.C."/>
            <person name="Zheng X.H."/>
            <person name="Zhong F."/>
            <person name="Delcher A.L."/>
            <person name="Huson D.H."/>
            <person name="Kravitz S.A."/>
            <person name="Mouchard L."/>
            <person name="Reinert K."/>
            <person name="Remington K.A."/>
            <person name="Clark A.G."/>
            <person name="Waterman M.S."/>
            <person name="Eichler E.E."/>
            <person name="Adams M.D."/>
            <person name="Hunkapiller M.W."/>
            <person name="Myers E.W."/>
            <person name="Venter J.C."/>
        </authorList>
    </citation>
    <scope>NUCLEOTIDE SEQUENCE [LARGE SCALE GENOMIC DNA]</scope>
</reference>
<reference key="6">
    <citation type="journal article" date="2004" name="Genome Res.">
        <title>The status, quality, and expansion of the NIH full-length cDNA project: the Mammalian Gene Collection (MGC).</title>
        <authorList>
            <consortium name="The MGC Project Team"/>
        </authorList>
    </citation>
    <scope>NUCLEOTIDE SEQUENCE [LARGE SCALE MRNA] (ISOFORM 2)</scope>
    <source>
        <tissue>Uterus</tissue>
    </source>
</reference>
<reference key="7">
    <citation type="journal article" date="2008" name="Cell">
        <title>A tripartite complex containing MRCK modulates lamellar actomyosin retrograde flow.</title>
        <authorList>
            <person name="Tan I."/>
            <person name="Yong J."/>
            <person name="Dong J.M."/>
            <person name="Lim L."/>
            <person name="Leung T."/>
        </authorList>
    </citation>
    <scope>PHOSPHORYLATION AT SER-20</scope>
</reference>
<reference key="8">
    <citation type="journal article" date="2011" name="Cell Death Differ.">
        <title>Caspase-activated ROCK-1 allows erythroblast terminal maturation independently of cytokine-induced Rho signaling.</title>
        <authorList>
            <person name="Gabet A.S."/>
            <person name="Coulon S."/>
            <person name="Fricot A."/>
            <person name="Vandekerckhove J."/>
            <person name="Chang Y."/>
            <person name="Ribeil J.A."/>
            <person name="Lordier L."/>
            <person name="Zermati Y."/>
            <person name="Asnafi V."/>
            <person name="Belaid Z."/>
            <person name="Debili N."/>
            <person name="Vainchenker W."/>
            <person name="Varet B."/>
            <person name="Hermine O."/>
            <person name="Courtois G."/>
        </authorList>
    </citation>
    <scope>PHOSPHORYLATION AT SER-20</scope>
</reference>
<reference key="9">
    <citation type="journal article" date="2011" name="FEBS Lett.">
        <title>Chelerythrine perturbs lamellar actomyosin filaments by selective inhibition of myotonic dystrophy kinase-related Cdc42-binding kinase.</title>
        <authorList>
            <person name="Tan I."/>
            <person name="Lai J."/>
            <person name="Yong J."/>
            <person name="Li S.F."/>
            <person name="Leung T."/>
        </authorList>
    </citation>
    <scope>PHOSPHORYLATION AT THR-19 AND SER-20</scope>
</reference>
<reference key="10">
    <citation type="journal article" date="2011" name="PLoS ONE">
        <title>New modularity of DAP-kinases: alternative splicing of the DRP-1 gene produces a ZIPk-like isoform.</title>
        <authorList>
            <person name="Shoval Y."/>
            <person name="Berissi H."/>
            <person name="Kimchi A."/>
            <person name="Pietrokovski S."/>
        </authorList>
    </citation>
    <scope>PHOSPHORYLATION AT SER-20 BY DAPK1; DAPK2 AND ZIPK/DAPK3</scope>
</reference>
<reference key="11">
    <citation type="journal article" date="2024" name="FEBS J.">
        <title>Leucine zipper protein 1 (LUZP1) regulates the constriction velocity of the contractile ring during cytokinesis.</title>
        <authorList>
            <person name="Hyodo T."/>
            <person name="Asano-Inami E."/>
            <person name="Ito S."/>
            <person name="Sugiyama M."/>
            <person name="Nawa A."/>
            <person name="Rahman M.L."/>
            <person name="Hasan M.N."/>
            <person name="Mihara Y."/>
            <person name="Lam V.Q."/>
            <person name="Karnan S."/>
            <person name="Ota A."/>
            <person name="Tsuzuki S."/>
            <person name="Hamaguchi M."/>
            <person name="Hosokawa Y."/>
            <person name="Konishi H."/>
        </authorList>
    </citation>
    <scope>INTERACTION WITH LUZP1</scope>
    <scope>PHOSPHORYLATION</scope>
</reference>
<reference key="12">
    <citation type="journal article" date="2018" name="Eur. J. Hum. Genet.">
        <title>Homozygous deletion in MYL9 expands the molecular basis of megacystis-microcolon-intestinal hypoperistalsis syndrome.</title>
        <authorList>
            <person name="Moreno C.A."/>
            <person name="Sobreira N."/>
            <person name="Pugh E."/>
            <person name="Zhang P."/>
            <person name="Steel G."/>
            <person name="Torres F.R."/>
            <person name="Cavalcanti D.P."/>
        </authorList>
    </citation>
    <scope>INVOLVEMENT IN MMIHS4</scope>
</reference>
<reference key="13">
    <citation type="journal article" date="2020" name="Mol. Genet. Genomic Med.">
        <title>Compound heterozygous loss of function variants in MYL9 in a child with megacystis-microcolon-intestinal hypoperistalsis syndrome.</title>
        <authorList>
            <person name="Kandler J.L."/>
            <person name="Sklirou E."/>
            <person name="Woerner A."/>
            <person name="Walsh L."/>
            <person name="Cox E."/>
            <person name="Xue Y."/>
        </authorList>
    </citation>
    <scope>INVOLVEMENT IN MMIHS4</scope>
</reference>
<organism>
    <name type="scientific">Homo sapiens</name>
    <name type="common">Human</name>
    <dbReference type="NCBI Taxonomy" id="9606"/>
    <lineage>
        <taxon>Eukaryota</taxon>
        <taxon>Metazoa</taxon>
        <taxon>Chordata</taxon>
        <taxon>Craniata</taxon>
        <taxon>Vertebrata</taxon>
        <taxon>Euteleostomi</taxon>
        <taxon>Mammalia</taxon>
        <taxon>Eutheria</taxon>
        <taxon>Euarchontoglires</taxon>
        <taxon>Primates</taxon>
        <taxon>Haplorrhini</taxon>
        <taxon>Catarrhini</taxon>
        <taxon>Hominidae</taxon>
        <taxon>Homo</taxon>
    </lineage>
</organism>
<feature type="initiator methionine" description="Removed" evidence="2">
    <location>
        <position position="1"/>
    </location>
</feature>
<feature type="chain" id="PRO_0000198735" description="Myosin regulatory light polypeptide 9">
    <location>
        <begin position="2"/>
        <end position="172"/>
    </location>
</feature>
<feature type="domain" description="EF-hand 1" evidence="4">
    <location>
        <begin position="29"/>
        <end position="64"/>
    </location>
</feature>
<feature type="domain" description="EF-hand 2" evidence="4">
    <location>
        <begin position="98"/>
        <end position="133"/>
    </location>
</feature>
<feature type="domain" description="EF-hand 3" evidence="4">
    <location>
        <begin position="134"/>
        <end position="169"/>
    </location>
</feature>
<feature type="region of interest" description="Disordered" evidence="5">
    <location>
        <begin position="1"/>
        <end position="20"/>
    </location>
</feature>
<feature type="compositionally biased region" description="Basic residues" evidence="5">
    <location>
        <begin position="1"/>
        <end position="16"/>
    </location>
</feature>
<feature type="binding site" evidence="4">
    <location>
        <position position="42"/>
    </location>
    <ligand>
        <name>Ca(2+)</name>
        <dbReference type="ChEBI" id="CHEBI:29108"/>
    </ligand>
</feature>
<feature type="binding site" evidence="4">
    <location>
        <position position="44"/>
    </location>
    <ligand>
        <name>Ca(2+)</name>
        <dbReference type="ChEBI" id="CHEBI:29108"/>
    </ligand>
</feature>
<feature type="binding site" evidence="4">
    <location>
        <position position="46"/>
    </location>
    <ligand>
        <name>Ca(2+)</name>
        <dbReference type="ChEBI" id="CHEBI:29108"/>
    </ligand>
</feature>
<feature type="binding site" evidence="4">
    <location>
        <position position="53"/>
    </location>
    <ligand>
        <name>Ca(2+)</name>
        <dbReference type="ChEBI" id="CHEBI:29108"/>
    </ligand>
</feature>
<feature type="modified residue" description="N-acetylserine" evidence="2">
    <location>
        <position position="2"/>
    </location>
</feature>
<feature type="modified residue" description="Phosphothreonine; by MLCK, CIT and ROCK2" evidence="6 10">
    <location>
        <position position="19"/>
    </location>
</feature>
<feature type="modified residue" description="Phosphoserine; by CDC42BP, CIT, MLCK, PAK1, ROCK1, ROCK2, DAPK1, DAPK2 and ZIPK/DAPK3" evidence="6 7 8 9 10">
    <location>
        <position position="20"/>
    </location>
</feature>
<feature type="splice variant" id="VSP_042834" description="In isoform 2." evidence="15 16">
    <location>
        <begin position="62"/>
        <end position="115"/>
    </location>
</feature>
<feature type="sequence conflict" description="In Ref. 1; AAA59852." evidence="17" ref="1">
    <original>T</original>
    <variation>A</variation>
    <location>
        <position position="10"/>
    </location>
</feature>
<feature type="sequence conflict" description="In Ref. 1; AAA59852." evidence="17" ref="1">
    <original>I</original>
    <variation>Y</variation>
    <location>
        <position position="81"/>
    </location>
</feature>
<feature type="sequence conflict" description="In Ref. 1; AAA59852." evidence="17" ref="1">
    <original>A</original>
    <variation>S</variation>
    <location>
        <position position="114"/>
    </location>
</feature>
<feature type="sequence conflict" description="In Ref. 1; AAA59852." evidence="17" ref="1">
    <original>E</original>
    <variation>K</variation>
    <location>
        <position position="125"/>
    </location>
</feature>
<feature type="sequence conflict" description="In Ref. 1; AAA59852." evidence="17" ref="1">
    <original>I</original>
    <variation>V</variation>
    <location>
        <position position="148"/>
    </location>
</feature>
<feature type="sequence conflict" description="In Ref. 1; AAA59852." evidence="17" ref="1">
    <original>D</original>
    <variation>H</variation>
    <location>
        <position position="171"/>
    </location>
</feature>
<evidence type="ECO:0000250" key="1">
    <source>
        <dbReference type="UniProtKB" id="P02612"/>
    </source>
</evidence>
<evidence type="ECO:0000250" key="2">
    <source>
        <dbReference type="UniProtKB" id="P29269"/>
    </source>
</evidence>
<evidence type="ECO:0000250" key="3">
    <source>
        <dbReference type="UniProtKB" id="Q9CQ19"/>
    </source>
</evidence>
<evidence type="ECO:0000255" key="4">
    <source>
        <dbReference type="PROSITE-ProRule" id="PRU00448"/>
    </source>
</evidence>
<evidence type="ECO:0000256" key="5">
    <source>
        <dbReference type="SAM" id="MobiDB-lite"/>
    </source>
</evidence>
<evidence type="ECO:0000269" key="6">
    <source>
    </source>
</evidence>
<evidence type="ECO:0000269" key="7">
    <source>
    </source>
</evidence>
<evidence type="ECO:0000269" key="8">
    <source>
    </source>
</evidence>
<evidence type="ECO:0000269" key="9">
    <source>
    </source>
</evidence>
<evidence type="ECO:0000269" key="10">
    <source>
    </source>
</evidence>
<evidence type="ECO:0000269" key="11">
    <source>
    </source>
</evidence>
<evidence type="ECO:0000269" key="12">
    <source>
    </source>
</evidence>
<evidence type="ECO:0000269" key="13">
    <source>
    </source>
</evidence>
<evidence type="ECO:0000269" key="14">
    <source>
    </source>
</evidence>
<evidence type="ECO:0000303" key="15">
    <source>
    </source>
</evidence>
<evidence type="ECO:0000303" key="16">
    <source ref="2"/>
</evidence>
<evidence type="ECO:0000305" key="17"/>
<keyword id="KW-0007">Acetylation</keyword>
<keyword id="KW-0025">Alternative splicing</keyword>
<keyword id="KW-0106">Calcium</keyword>
<keyword id="KW-0963">Cytoplasm</keyword>
<keyword id="KW-0206">Cytoskeleton</keyword>
<keyword id="KW-0479">Metal-binding</keyword>
<keyword id="KW-0505">Motor protein</keyword>
<keyword id="KW-0514">Muscle protein</keyword>
<keyword id="KW-0518">Myosin</keyword>
<keyword id="KW-0597">Phosphoprotein</keyword>
<keyword id="KW-1267">Proteomics identification</keyword>
<keyword id="KW-1185">Reference proteome</keyword>
<keyword id="KW-0677">Repeat</keyword>
<comment type="function">
    <text evidence="3 6 11">Myosin regulatory subunit that plays an important role in regulation of both smooth muscle and nonmuscle cell contractile activity via its phosphorylation. Implicated in cytokinesis, receptor capping, and cell locomotion (PubMed:11942626, PubMed:2526655). In myoblasts, may regulate PIEZO1-dependent cortical actomyosin assembly involved in myotube formation (By similarity).</text>
</comment>
<comment type="subunit">
    <text evidence="3 14">Myosin is a hexamer of 2 heavy chains and 4 light chains: interacts with myosin heavy chain MYO19 (By similarity). Interacts with LUZP1; the interaction results in inhibition of phosphorylation of MYL9 by DAPK3 (PubMed:38009294).</text>
</comment>
<comment type="interaction">
    <interactant intactId="EBI-13066228">
        <id>P24844-2</id>
    </interactant>
    <interactant intactId="EBI-11991020">
        <id>A6NI15</id>
        <label>MSGN1</label>
    </interactant>
    <organismsDiffer>false</organismsDiffer>
    <experiments>3</experiments>
</comment>
<comment type="interaction">
    <interactant intactId="EBI-13066228">
        <id>P24844-2</id>
    </interactant>
    <interactant intactId="EBI-2932492">
        <id>Q99757</id>
        <label>TXN2</label>
    </interactant>
    <organismsDiffer>false</organismsDiffer>
    <experiments>3</experiments>
</comment>
<comment type="subcellular location">
    <subcellularLocation>
        <location evidence="3">Cytoplasm</location>
        <location evidence="3">Cytoskeleton</location>
    </subcellularLocation>
    <subcellularLocation>
        <location evidence="3">Cytoplasm</location>
        <location evidence="3">Cell cortex</location>
    </subcellularLocation>
    <text evidence="3">Colocalizes with F-actin, MYH9 and PIEZO1 at the actomyosin cortex in myoblasts.</text>
</comment>
<comment type="alternative products">
    <event type="alternative splicing"/>
    <isoform>
        <id>P24844-1</id>
        <name>1</name>
        <sequence type="displayed"/>
    </isoform>
    <isoform>
        <id>P24844-2</id>
        <name>2</name>
        <sequence type="described" ref="VSP_042834"/>
    </isoform>
</comment>
<comment type="tissue specificity">
    <text evidence="11">Smooth muscle tissues and in some, but not all, nonmuscle cells.</text>
</comment>
<comment type="PTM">
    <text evidence="1 6 10 14">Phosphorylation increases the actin-activated myosin ATPase activity and thereby regulates the contractile activity. It is required to generate the driving force in the migration of the cells but not necessary for localization of myosin-2 at the leading edge. Phosphorylation is required for myotube formation. Phosphorylated by DAPK3; DAPK3-mediated phosphorylation is inhibited by LUZP1 (PubMed:38009294).</text>
</comment>
<comment type="disease" evidence="12 13">
    <disease id="DI-06130">
        <name>Megacystis-microcolon-intestinal hypoperistalsis syndrome 4</name>
        <acronym>MMIHS4</acronym>
        <description>A form of megacystis-microcolon-intestinal hypoperistalsis syndrome, a congenital visceral myopathy primarily affecting females, and characterized by loss of smooth muscle contraction in the bladder and intestine. Affected individuals present at birth with functional obstruction of intestine, microcolon, dilation of bladder, and secondary hydronephrosis. The majority of cases have a fatal outcome due to malnutrition and sepsis, followed by multiorgan failure. MMIHS4 inheritance is autosomal recessive.</description>
        <dbReference type="MIM" id="619365"/>
    </disease>
    <text>The disease may be caused by variants affecting the gene represented in this entry.</text>
</comment>
<comment type="miscellaneous">
    <text>This chain binds calcium.</text>
</comment>